<evidence type="ECO:0000255" key="1">
    <source>
        <dbReference type="HAMAP-Rule" id="MF_01334"/>
    </source>
</evidence>
<evidence type="ECO:0000256" key="2">
    <source>
        <dbReference type="SAM" id="MobiDB-lite"/>
    </source>
</evidence>
<evidence type="ECO:0000305" key="3"/>
<proteinExistence type="inferred from homology"/>
<gene>
    <name evidence="1" type="primary">rplY</name>
    <name evidence="1" type="synonym">ctc</name>
    <name type="ordered locus">cu0579</name>
</gene>
<keyword id="KW-1185">Reference proteome</keyword>
<keyword id="KW-0687">Ribonucleoprotein</keyword>
<keyword id="KW-0689">Ribosomal protein</keyword>
<keyword id="KW-0694">RNA-binding</keyword>
<keyword id="KW-0699">rRNA-binding</keyword>
<comment type="function">
    <text evidence="1">This is one of the proteins that binds to the 5S RNA in the ribosome where it forms part of the central protuberance.</text>
</comment>
<comment type="subunit">
    <text evidence="1">Part of the 50S ribosomal subunit; part of the 5S rRNA/L5/L18/L25 subcomplex. Contacts the 5S rRNA. Binds to the 5S rRNA independently of L5 and L18.</text>
</comment>
<comment type="similarity">
    <text evidence="1">Belongs to the bacterial ribosomal protein bL25 family. CTC subfamily.</text>
</comment>
<sequence>MAELTRIEGVLRTEFGKGASRRLRRDGRIPLVVYGNELDPVHVHVDTLDLHALVRNEGVNAVFELNIDGEDNLVMVKAIDQNVLTLDIDHADLLNVKRGERVEVEVPVIHEGLPAPGAMVVQDVDVLLLEVDVLDIPEEIVLDINGLEIGEQILAKDVKMPSNAVLVSDAEELVINIVEPEEEELPEDDEAAAEGEDAAAGEEAEAPAESED</sequence>
<dbReference type="EMBL" id="AM942444">
    <property type="protein sequence ID" value="CAQ04539.1"/>
    <property type="molecule type" value="Genomic_DNA"/>
</dbReference>
<dbReference type="RefSeq" id="WP_012359831.1">
    <property type="nucleotide sequence ID" value="NC_010545.1"/>
</dbReference>
<dbReference type="SMR" id="B1VFK0"/>
<dbReference type="STRING" id="504474.cu0579"/>
<dbReference type="KEGG" id="cur:cu0579"/>
<dbReference type="eggNOG" id="COG1825">
    <property type="taxonomic scope" value="Bacteria"/>
</dbReference>
<dbReference type="HOGENOM" id="CLU_075939_1_0_11"/>
<dbReference type="Proteomes" id="UP000001727">
    <property type="component" value="Chromosome"/>
</dbReference>
<dbReference type="GO" id="GO:0022625">
    <property type="term" value="C:cytosolic large ribosomal subunit"/>
    <property type="evidence" value="ECO:0007669"/>
    <property type="project" value="TreeGrafter"/>
</dbReference>
<dbReference type="GO" id="GO:0008097">
    <property type="term" value="F:5S rRNA binding"/>
    <property type="evidence" value="ECO:0007669"/>
    <property type="project" value="InterPro"/>
</dbReference>
<dbReference type="GO" id="GO:0003735">
    <property type="term" value="F:structural constituent of ribosome"/>
    <property type="evidence" value="ECO:0007669"/>
    <property type="project" value="InterPro"/>
</dbReference>
<dbReference type="GO" id="GO:0006412">
    <property type="term" value="P:translation"/>
    <property type="evidence" value="ECO:0007669"/>
    <property type="project" value="UniProtKB-UniRule"/>
</dbReference>
<dbReference type="CDD" id="cd00495">
    <property type="entry name" value="Ribosomal_L25_TL5_CTC"/>
    <property type="match status" value="1"/>
</dbReference>
<dbReference type="Gene3D" id="2.170.120.20">
    <property type="entry name" value="Ribosomal protein L25, beta domain"/>
    <property type="match status" value="1"/>
</dbReference>
<dbReference type="Gene3D" id="2.40.240.10">
    <property type="entry name" value="Ribosomal Protein L25, Chain P"/>
    <property type="match status" value="1"/>
</dbReference>
<dbReference type="HAMAP" id="MF_01334">
    <property type="entry name" value="Ribosomal_bL25_CTC"/>
    <property type="match status" value="1"/>
</dbReference>
<dbReference type="InterPro" id="IPR020056">
    <property type="entry name" value="Rbsml_bL25/Gln-tRNA_synth_N"/>
</dbReference>
<dbReference type="InterPro" id="IPR011035">
    <property type="entry name" value="Ribosomal_bL25/Gln-tRNA_synth"/>
</dbReference>
<dbReference type="InterPro" id="IPR020057">
    <property type="entry name" value="Ribosomal_bL25_b-dom"/>
</dbReference>
<dbReference type="InterPro" id="IPR037121">
    <property type="entry name" value="Ribosomal_bL25_C"/>
</dbReference>
<dbReference type="InterPro" id="IPR001021">
    <property type="entry name" value="Ribosomal_bL25_long"/>
</dbReference>
<dbReference type="InterPro" id="IPR029751">
    <property type="entry name" value="Ribosomal_L25_dom"/>
</dbReference>
<dbReference type="InterPro" id="IPR020930">
    <property type="entry name" value="Ribosomal_uL5_bac-type"/>
</dbReference>
<dbReference type="NCBIfam" id="TIGR00731">
    <property type="entry name" value="bL25_bact_ctc"/>
    <property type="match status" value="1"/>
</dbReference>
<dbReference type="NCBIfam" id="NF004131">
    <property type="entry name" value="PRK05618.2-1"/>
    <property type="match status" value="1"/>
</dbReference>
<dbReference type="PANTHER" id="PTHR33284">
    <property type="entry name" value="RIBOSOMAL PROTEIN L25/GLN-TRNA SYNTHETASE, ANTI-CODON-BINDING DOMAIN-CONTAINING PROTEIN"/>
    <property type="match status" value="1"/>
</dbReference>
<dbReference type="PANTHER" id="PTHR33284:SF1">
    <property type="entry name" value="RIBOSOMAL PROTEIN L25_GLN-TRNA SYNTHETASE, ANTI-CODON-BINDING DOMAIN-CONTAINING PROTEIN"/>
    <property type="match status" value="1"/>
</dbReference>
<dbReference type="Pfam" id="PF01386">
    <property type="entry name" value="Ribosomal_L25p"/>
    <property type="match status" value="1"/>
</dbReference>
<dbReference type="Pfam" id="PF14693">
    <property type="entry name" value="Ribosomal_TL5_C"/>
    <property type="match status" value="1"/>
</dbReference>
<dbReference type="SUPFAM" id="SSF50715">
    <property type="entry name" value="Ribosomal protein L25-like"/>
    <property type="match status" value="1"/>
</dbReference>
<name>RL25_CORU7</name>
<accession>B1VFK0</accession>
<reference key="1">
    <citation type="journal article" date="2008" name="J. Biotechnol.">
        <title>The lifestyle of Corynebacterium urealyticum derived from its complete genome sequence established by pyrosequencing.</title>
        <authorList>
            <person name="Tauch A."/>
            <person name="Trost E."/>
            <person name="Tilker A."/>
            <person name="Ludewig U."/>
            <person name="Schneiker S."/>
            <person name="Goesmann A."/>
            <person name="Arnold W."/>
            <person name="Bekel T."/>
            <person name="Brinkrolf K."/>
            <person name="Brune I."/>
            <person name="Goetker S."/>
            <person name="Kalinowski J."/>
            <person name="Kamp P.-B."/>
            <person name="Lobo F.P."/>
            <person name="Viehoever P."/>
            <person name="Weisshaar B."/>
            <person name="Soriano F."/>
            <person name="Droege M."/>
            <person name="Puehler A."/>
        </authorList>
    </citation>
    <scope>NUCLEOTIDE SEQUENCE [LARGE SCALE GENOMIC DNA]</scope>
    <source>
        <strain>ATCC 43042 / DSM 7109</strain>
    </source>
</reference>
<protein>
    <recommendedName>
        <fullName evidence="1">Large ribosomal subunit protein bL25</fullName>
    </recommendedName>
    <alternativeName>
        <fullName evidence="3">50S ribosomal protein L25</fullName>
    </alternativeName>
    <alternativeName>
        <fullName evidence="1">General stress protein CTC</fullName>
    </alternativeName>
</protein>
<feature type="chain" id="PRO_1000142508" description="Large ribosomal subunit protein bL25">
    <location>
        <begin position="1"/>
        <end position="212"/>
    </location>
</feature>
<feature type="region of interest" description="Disordered" evidence="2">
    <location>
        <begin position="179"/>
        <end position="212"/>
    </location>
</feature>
<organism>
    <name type="scientific">Corynebacterium urealyticum (strain ATCC 43042 / DSM 7109)</name>
    <dbReference type="NCBI Taxonomy" id="504474"/>
    <lineage>
        <taxon>Bacteria</taxon>
        <taxon>Bacillati</taxon>
        <taxon>Actinomycetota</taxon>
        <taxon>Actinomycetes</taxon>
        <taxon>Mycobacteriales</taxon>
        <taxon>Corynebacteriaceae</taxon>
        <taxon>Corynebacterium</taxon>
    </lineage>
</organism>